<organism>
    <name type="scientific">Pseudotsuga menziesii</name>
    <name type="common">Douglas-fir</name>
    <name type="synonym">Abies menziesii</name>
    <dbReference type="NCBI Taxonomy" id="3357"/>
    <lineage>
        <taxon>Eukaryota</taxon>
        <taxon>Viridiplantae</taxon>
        <taxon>Streptophyta</taxon>
        <taxon>Embryophyta</taxon>
        <taxon>Tracheophyta</taxon>
        <taxon>Spermatophyta</taxon>
        <taxon>Pinopsida</taxon>
        <taxon>Pinidae</taxon>
        <taxon>Conifers I</taxon>
        <taxon>Pinales</taxon>
        <taxon>Pinaceae</taxon>
        <taxon>Pseudotsuga</taxon>
    </lineage>
</organism>
<proteinExistence type="evidence at protein level"/>
<comment type="function">
    <text evidence="1">RuBisCO catalyzes two reactions: the carboxylation of D-ribulose 1,5-bisphosphate, the primary event in carbon dioxide fixation, as well as the oxidative fragmentation of the pentose substrate in the photorespiration process. Both reactions occur simultaneously and in competition at the same active site.</text>
</comment>
<comment type="catalytic activity">
    <reaction evidence="1">
        <text>2 (2R)-3-phosphoglycerate + 2 H(+) = D-ribulose 1,5-bisphosphate + CO2 + H2O</text>
        <dbReference type="Rhea" id="RHEA:23124"/>
        <dbReference type="ChEBI" id="CHEBI:15377"/>
        <dbReference type="ChEBI" id="CHEBI:15378"/>
        <dbReference type="ChEBI" id="CHEBI:16526"/>
        <dbReference type="ChEBI" id="CHEBI:57870"/>
        <dbReference type="ChEBI" id="CHEBI:58272"/>
        <dbReference type="EC" id="4.1.1.39"/>
    </reaction>
</comment>
<comment type="catalytic activity">
    <reaction evidence="1">
        <text>D-ribulose 1,5-bisphosphate + O2 = 2-phosphoglycolate + (2R)-3-phosphoglycerate + 2 H(+)</text>
        <dbReference type="Rhea" id="RHEA:36631"/>
        <dbReference type="ChEBI" id="CHEBI:15378"/>
        <dbReference type="ChEBI" id="CHEBI:15379"/>
        <dbReference type="ChEBI" id="CHEBI:57870"/>
        <dbReference type="ChEBI" id="CHEBI:58033"/>
        <dbReference type="ChEBI" id="CHEBI:58272"/>
    </reaction>
</comment>
<comment type="cofactor">
    <cofactor evidence="1">
        <name>Mg(2+)</name>
        <dbReference type="ChEBI" id="CHEBI:18420"/>
    </cofactor>
    <text evidence="1">Binds 1 Mg(2+) ion per subunit.</text>
</comment>
<comment type="subunit">
    <text evidence="1">Heterohexadecamer of 8 large chains and 8 small chains; disulfide-linked. The disulfide link is formed within the large subunit homodimers.</text>
</comment>
<comment type="subcellular location">
    <subcellularLocation>
        <location>Plastid</location>
        <location>Chloroplast</location>
    </subcellularLocation>
</comment>
<comment type="PTM">
    <text evidence="1">The disulfide bond which can form in the large chain dimeric partners within the hexadecamer appears to be associated with oxidative stress and protein turnover.</text>
</comment>
<comment type="miscellaneous">
    <text evidence="1">The basic functional RuBisCO is composed of a large chain homodimer in a 'head-to-tail' conformation. In form I RuBisCO this homodimer is arranged in a barrel-like tetramer with the small subunits forming a tetrameric 'cap' on each end of the 'barrel'.</text>
</comment>
<comment type="similarity">
    <text evidence="1">Belongs to the RuBisCO large chain family. Type I subfamily.</text>
</comment>
<gene>
    <name evidence="1" type="primary">rbcL</name>
</gene>
<protein>
    <recommendedName>
        <fullName evidence="1">Ribulose bisphosphate carboxylase large chain</fullName>
        <shortName evidence="1">RuBisCO large subunit</shortName>
        <ecNumber evidence="1">4.1.1.39</ecNumber>
    </recommendedName>
</protein>
<reference key="1">
    <citation type="journal article" date="1990" name="Plant Mol. Biol.">
        <title>Sequence of the gene for the large subunit of ribulose 1,5-bisphosphate carboxylase from a gymnosperm, Douglas fir.</title>
        <authorList>
            <person name="Hipkins V."/>
            <person name="Tsai C.H."/>
            <person name="Strauss S."/>
        </authorList>
    </citation>
    <scope>NUCLEOTIDE SEQUENCE [GENOMIC DNA]</scope>
</reference>
<reference key="2">
    <citation type="journal article" date="2008" name="J. Proteomics">
        <title>A proteomics approach to identify proteins differentially expressed in Douglas-fir seedlings infected by Phellinus sulphurascens.</title>
        <authorList>
            <person name="Islam M.A."/>
            <person name="Sturrock R.N."/>
            <person name="Ekramoddoullah A.K.M."/>
        </authorList>
    </citation>
    <scope>IDENTIFICATION BY MASS SPECTROMETRY</scope>
</reference>
<name>RBL_PSEMZ</name>
<dbReference type="EC" id="4.1.1.39" evidence="1"/>
<dbReference type="EMBL" id="X52937">
    <property type="protein sequence ID" value="CAA37107.1"/>
    <property type="molecule type" value="Genomic_DNA"/>
</dbReference>
<dbReference type="PIR" id="S12798">
    <property type="entry name" value="RKKHLD"/>
</dbReference>
<dbReference type="SMR" id="P69571"/>
<dbReference type="GO" id="GO:0009507">
    <property type="term" value="C:chloroplast"/>
    <property type="evidence" value="ECO:0007669"/>
    <property type="project" value="UniProtKB-SubCell"/>
</dbReference>
<dbReference type="GO" id="GO:0000287">
    <property type="term" value="F:magnesium ion binding"/>
    <property type="evidence" value="ECO:0007669"/>
    <property type="project" value="UniProtKB-UniRule"/>
</dbReference>
<dbReference type="GO" id="GO:0004497">
    <property type="term" value="F:monooxygenase activity"/>
    <property type="evidence" value="ECO:0007669"/>
    <property type="project" value="UniProtKB-KW"/>
</dbReference>
<dbReference type="GO" id="GO:0016984">
    <property type="term" value="F:ribulose-bisphosphate carboxylase activity"/>
    <property type="evidence" value="ECO:0007669"/>
    <property type="project" value="UniProtKB-UniRule"/>
</dbReference>
<dbReference type="GO" id="GO:0009853">
    <property type="term" value="P:photorespiration"/>
    <property type="evidence" value="ECO:0007669"/>
    <property type="project" value="UniProtKB-KW"/>
</dbReference>
<dbReference type="GO" id="GO:0019253">
    <property type="term" value="P:reductive pentose-phosphate cycle"/>
    <property type="evidence" value="ECO:0007669"/>
    <property type="project" value="UniProtKB-UniRule"/>
</dbReference>
<dbReference type="CDD" id="cd08212">
    <property type="entry name" value="RuBisCO_large_I"/>
    <property type="match status" value="1"/>
</dbReference>
<dbReference type="FunFam" id="3.20.20.110:FF:000001">
    <property type="entry name" value="Ribulose bisphosphate carboxylase large chain"/>
    <property type="match status" value="1"/>
</dbReference>
<dbReference type="FunFam" id="3.30.70.150:FF:000001">
    <property type="entry name" value="Ribulose bisphosphate carboxylase large chain"/>
    <property type="match status" value="1"/>
</dbReference>
<dbReference type="Gene3D" id="3.20.20.110">
    <property type="entry name" value="Ribulose bisphosphate carboxylase, large subunit, C-terminal domain"/>
    <property type="match status" value="1"/>
</dbReference>
<dbReference type="Gene3D" id="3.30.70.150">
    <property type="entry name" value="RuBisCO large subunit, N-terminal domain"/>
    <property type="match status" value="1"/>
</dbReference>
<dbReference type="HAMAP" id="MF_01338">
    <property type="entry name" value="RuBisCO_L_type1"/>
    <property type="match status" value="1"/>
</dbReference>
<dbReference type="InterPro" id="IPR033966">
    <property type="entry name" value="RuBisCO"/>
</dbReference>
<dbReference type="InterPro" id="IPR020878">
    <property type="entry name" value="RuBisCo_large_chain_AS"/>
</dbReference>
<dbReference type="InterPro" id="IPR000685">
    <property type="entry name" value="RuBisCO_lsu_C"/>
</dbReference>
<dbReference type="InterPro" id="IPR036376">
    <property type="entry name" value="RuBisCO_lsu_C_sf"/>
</dbReference>
<dbReference type="InterPro" id="IPR017443">
    <property type="entry name" value="RuBisCO_lsu_fd_N"/>
</dbReference>
<dbReference type="InterPro" id="IPR036422">
    <property type="entry name" value="RuBisCO_lsu_N_sf"/>
</dbReference>
<dbReference type="InterPro" id="IPR020888">
    <property type="entry name" value="RuBisCO_lsuI"/>
</dbReference>
<dbReference type="NCBIfam" id="NF003252">
    <property type="entry name" value="PRK04208.1"/>
    <property type="match status" value="1"/>
</dbReference>
<dbReference type="PANTHER" id="PTHR42704">
    <property type="entry name" value="RIBULOSE BISPHOSPHATE CARBOXYLASE"/>
    <property type="match status" value="1"/>
</dbReference>
<dbReference type="PANTHER" id="PTHR42704:SF17">
    <property type="entry name" value="RIBULOSE BISPHOSPHATE CARBOXYLASE LARGE CHAIN"/>
    <property type="match status" value="1"/>
</dbReference>
<dbReference type="Pfam" id="PF00016">
    <property type="entry name" value="RuBisCO_large"/>
    <property type="match status" value="1"/>
</dbReference>
<dbReference type="Pfam" id="PF02788">
    <property type="entry name" value="RuBisCO_large_N"/>
    <property type="match status" value="1"/>
</dbReference>
<dbReference type="SFLD" id="SFLDG01052">
    <property type="entry name" value="RuBisCO"/>
    <property type="match status" value="1"/>
</dbReference>
<dbReference type="SFLD" id="SFLDS00014">
    <property type="entry name" value="RuBisCO"/>
    <property type="match status" value="1"/>
</dbReference>
<dbReference type="SFLD" id="SFLDG00301">
    <property type="entry name" value="RuBisCO-like_proteins"/>
    <property type="match status" value="1"/>
</dbReference>
<dbReference type="SUPFAM" id="SSF51649">
    <property type="entry name" value="RuBisCo, C-terminal domain"/>
    <property type="match status" value="1"/>
</dbReference>
<dbReference type="SUPFAM" id="SSF54966">
    <property type="entry name" value="RuBisCO, large subunit, small (N-terminal) domain"/>
    <property type="match status" value="1"/>
</dbReference>
<dbReference type="PROSITE" id="PS00157">
    <property type="entry name" value="RUBISCO_LARGE"/>
    <property type="match status" value="1"/>
</dbReference>
<evidence type="ECO:0000255" key="1">
    <source>
        <dbReference type="HAMAP-Rule" id="MF_01338"/>
    </source>
</evidence>
<keyword id="KW-0007">Acetylation</keyword>
<keyword id="KW-0113">Calvin cycle</keyword>
<keyword id="KW-0120">Carbon dioxide fixation</keyword>
<keyword id="KW-0150">Chloroplast</keyword>
<keyword id="KW-1015">Disulfide bond</keyword>
<keyword id="KW-0456">Lyase</keyword>
<keyword id="KW-0460">Magnesium</keyword>
<keyword id="KW-0479">Metal-binding</keyword>
<keyword id="KW-0488">Methylation</keyword>
<keyword id="KW-0503">Monooxygenase</keyword>
<keyword id="KW-0560">Oxidoreductase</keyword>
<keyword id="KW-0601">Photorespiration</keyword>
<keyword id="KW-0602">Photosynthesis</keyword>
<keyword id="KW-0934">Plastid</keyword>
<sequence>MSPKTETKASVGFKAGVKDYRLTYYTPEYQTKDTDILAAFRVTPQPGVPPEEAGAAVAAESSTGTWTTVWTDGLTSLDRYKGRCYDIEAVPGEESQFIAYVAYPLDLFEEGSVTNLFTSIVGNVFGFKALRALRLEDLRIPPAYSKTFQGPPHGIQVERDKLNKYGRPLLGCTIKPKLGLSAKNYGRAVYECLRGGLDFTKDDENVNSQPFMRWRDRFVFCAEALYKAQAETGEIKGHYLNATAGTCEEMMKRAVFARELGVPIVMHDYLTGGFTANTSLAHYCRDNGLLLHIHRAMHAVIDRQRNHGMHFRVLAKALRMSGGDHIHAGTVVGKLEGERDVTLGFVDLLRDDFIEKDRSRGIYFTQDWVSMPGVLPVASGGIHVWHMPALTEIFGDDSVLQFGGGTLGHPWGNAPGAVANRVALEACVQARNEGRDLAREGNEVIREATKWSPELAAACEVWKEIKFEFDTIDYL</sequence>
<geneLocation type="chloroplast"/>
<feature type="propeptide" id="PRO_0000031379" evidence="1">
    <location>
        <begin position="1"/>
        <end position="2"/>
    </location>
</feature>
<feature type="chain" id="PRO_0000031380" description="Ribulose bisphosphate carboxylase large chain">
    <location>
        <begin position="3"/>
        <end position="475"/>
    </location>
</feature>
<feature type="active site" description="Proton acceptor" evidence="1">
    <location>
        <position position="175"/>
    </location>
</feature>
<feature type="active site" description="Proton acceptor" evidence="1">
    <location>
        <position position="294"/>
    </location>
</feature>
<feature type="binding site" description="in homodimeric partner" evidence="1">
    <location>
        <position position="123"/>
    </location>
    <ligand>
        <name>substrate</name>
    </ligand>
</feature>
<feature type="binding site" evidence="1">
    <location>
        <position position="173"/>
    </location>
    <ligand>
        <name>substrate</name>
    </ligand>
</feature>
<feature type="binding site" evidence="1">
    <location>
        <position position="177"/>
    </location>
    <ligand>
        <name>substrate</name>
    </ligand>
</feature>
<feature type="binding site" description="via carbamate group" evidence="1">
    <location>
        <position position="201"/>
    </location>
    <ligand>
        <name>Mg(2+)</name>
        <dbReference type="ChEBI" id="CHEBI:18420"/>
    </ligand>
</feature>
<feature type="binding site" evidence="1">
    <location>
        <position position="203"/>
    </location>
    <ligand>
        <name>Mg(2+)</name>
        <dbReference type="ChEBI" id="CHEBI:18420"/>
    </ligand>
</feature>
<feature type="binding site" evidence="1">
    <location>
        <position position="204"/>
    </location>
    <ligand>
        <name>Mg(2+)</name>
        <dbReference type="ChEBI" id="CHEBI:18420"/>
    </ligand>
</feature>
<feature type="binding site" evidence="1">
    <location>
        <position position="295"/>
    </location>
    <ligand>
        <name>substrate</name>
    </ligand>
</feature>
<feature type="binding site" evidence="1">
    <location>
        <position position="327"/>
    </location>
    <ligand>
        <name>substrate</name>
    </ligand>
</feature>
<feature type="binding site" evidence="1">
    <location>
        <position position="379"/>
    </location>
    <ligand>
        <name>substrate</name>
    </ligand>
</feature>
<feature type="site" description="Transition state stabilizer" evidence="1">
    <location>
        <position position="334"/>
    </location>
</feature>
<feature type="modified residue" description="N-acetylproline" evidence="1">
    <location>
        <position position="3"/>
    </location>
</feature>
<feature type="modified residue" description="N6,N6,N6-trimethyllysine" evidence="1">
    <location>
        <position position="14"/>
    </location>
</feature>
<feature type="modified residue" description="N6-carboxylysine" evidence="1">
    <location>
        <position position="201"/>
    </location>
</feature>
<feature type="disulfide bond" description="Interchain; in linked form" evidence="1">
    <location>
        <position position="247"/>
    </location>
</feature>
<accession>P69571</accession>
<accession>P17249</accession>
<accession>P85933</accession>